<organism>
    <name type="scientific">Papio hamadryas</name>
    <name type="common">Hamadryas baboon</name>
    <dbReference type="NCBI Taxonomy" id="9557"/>
    <lineage>
        <taxon>Eukaryota</taxon>
        <taxon>Metazoa</taxon>
        <taxon>Chordata</taxon>
        <taxon>Craniata</taxon>
        <taxon>Vertebrata</taxon>
        <taxon>Euteleostomi</taxon>
        <taxon>Mammalia</taxon>
        <taxon>Eutheria</taxon>
        <taxon>Euarchontoglires</taxon>
        <taxon>Primates</taxon>
        <taxon>Haplorrhini</taxon>
        <taxon>Catarrhini</taxon>
        <taxon>Cercopithecidae</taxon>
        <taxon>Cercopithecinae</taxon>
        <taxon>Papio</taxon>
    </lineage>
</organism>
<sequence length="839" mass="95040">MRPRATTICSLFFLLRVLAEPAKNSDFYLPGDYLLGGLFTLHANMKGIVHLDYLQVPMCKEYETKVIGYNLMQAMRFAVEEINNDSSLLPDVLLGYEMVDVCYVSNNVQPVLYFLAQEDDLLPIQENYSNYVSRVVAVIGPDNSDAVMTVANFLSLFLLPQITYSAISDELRDKVRFPALLRTAPSADHHIEAMVQLMLHFRWNWIIVLVSGDTYGRDNGQLLGDRLARGDICIAFQETLPTVQPNQNMTSEERQRLVTIVDKLQQSTARVVVVFSPDLTLYNFFNEVLRQNFTGAVWIASESWAIDPVLHNLTELRHMGTFLGITIQSVPIPGFSEFRVRDPQAGPPPLSRTSQRSTCNQECDSCLNGTLSFNNVLRLSGERVVYSVYSAVYAVAHALHSLLGCDHGTCTKTEVYPWQLLKEIWKVNFTLLDHQISFDPQGDMALHLEIVQWQWDLSQNPFQSVASYYPLQRQLKTIQDISWHTINNTIPVSMCSKRCQSGQKKKPVGIHICCFECIDCLPGTFLNQTEDEYECQACPSNEWSHQSEASCFKRRLAFLEWHEAPTIVVALLAALGFLSTLAILVIFWRHFQTPMVRSAGGPMCFLMLTLLLVAYMVVPVYVGPPKVSTCFCRQALFPLCFTICISCIAVRSFQIVCVFKMASRFPRAYSYWVRYQGPYVSMAFITVLKMVTVVIGMLATGLNPTTRIDPDDPKIMIVSCNPNYRNSLFFNTGLDLLLSVVGFSFAYMGKELPTNYNEAKFITLSMTFYFTSSVSLCTFMSAYNGVLVTIMDLLVTVLNLLAISLGYFGPKCYMILFYPERNTPAYFNSMIQGYTMRRD</sequence>
<dbReference type="EMBL" id="DQ386300">
    <property type="protein sequence ID" value="ABD37684.1"/>
    <property type="molecule type" value="mRNA"/>
</dbReference>
<dbReference type="SMR" id="A3QP07"/>
<dbReference type="GlyCosmos" id="A3QP07">
    <property type="glycosylation" value="9 sites, No reported glycans"/>
</dbReference>
<dbReference type="GO" id="GO:0005886">
    <property type="term" value="C:plasma membrane"/>
    <property type="evidence" value="ECO:0007669"/>
    <property type="project" value="UniProtKB-SubCell"/>
</dbReference>
<dbReference type="GO" id="GO:1903767">
    <property type="term" value="C:sweet taste receptor complex"/>
    <property type="evidence" value="ECO:0007669"/>
    <property type="project" value="TreeGrafter"/>
</dbReference>
<dbReference type="GO" id="GO:0004930">
    <property type="term" value="F:G protein-coupled receptor activity"/>
    <property type="evidence" value="ECO:0007669"/>
    <property type="project" value="UniProtKB-KW"/>
</dbReference>
<dbReference type="GO" id="GO:0033041">
    <property type="term" value="F:sweet taste receptor activity"/>
    <property type="evidence" value="ECO:0007669"/>
    <property type="project" value="TreeGrafter"/>
</dbReference>
<dbReference type="CDD" id="cd15288">
    <property type="entry name" value="7tmC_TAS1R2"/>
    <property type="match status" value="1"/>
</dbReference>
<dbReference type="CDD" id="cd06363">
    <property type="entry name" value="PBP1_taste_receptor"/>
    <property type="match status" value="1"/>
</dbReference>
<dbReference type="FunFam" id="3.40.50.2300:FF:000016">
    <property type="entry name" value="Taste 1 receptor member 2"/>
    <property type="match status" value="1"/>
</dbReference>
<dbReference type="FunFam" id="2.10.50.30:FF:000004">
    <property type="entry name" value="Taste receptor type 1 member 3-like protein"/>
    <property type="match status" value="1"/>
</dbReference>
<dbReference type="Gene3D" id="3.40.50.2300">
    <property type="match status" value="2"/>
</dbReference>
<dbReference type="Gene3D" id="2.10.50.30">
    <property type="entry name" value="GPCR, family 3, nine cysteines domain"/>
    <property type="match status" value="1"/>
</dbReference>
<dbReference type="InterPro" id="IPR001828">
    <property type="entry name" value="ANF_lig-bd_rcpt"/>
</dbReference>
<dbReference type="InterPro" id="IPR000337">
    <property type="entry name" value="GPCR_3"/>
</dbReference>
<dbReference type="InterPro" id="IPR011500">
    <property type="entry name" value="GPCR_3_9-Cys_dom"/>
</dbReference>
<dbReference type="InterPro" id="IPR038550">
    <property type="entry name" value="GPCR_3_9-Cys_sf"/>
</dbReference>
<dbReference type="InterPro" id="IPR017978">
    <property type="entry name" value="GPCR_3_C"/>
</dbReference>
<dbReference type="InterPro" id="IPR000068">
    <property type="entry name" value="GPCR_3_Ca_sens_rcpt-rel"/>
</dbReference>
<dbReference type="InterPro" id="IPR017979">
    <property type="entry name" value="GPCR_3_CS"/>
</dbReference>
<dbReference type="InterPro" id="IPR028082">
    <property type="entry name" value="Peripla_BP_I"/>
</dbReference>
<dbReference type="PANTHER" id="PTHR24061">
    <property type="entry name" value="CALCIUM-SENSING RECEPTOR-RELATED"/>
    <property type="match status" value="1"/>
</dbReference>
<dbReference type="PANTHER" id="PTHR24061:SF517">
    <property type="entry name" value="TASTE RECEPTOR TYPE 1 MEMBER 2"/>
    <property type="match status" value="1"/>
</dbReference>
<dbReference type="Pfam" id="PF00003">
    <property type="entry name" value="7tm_3"/>
    <property type="match status" value="1"/>
</dbReference>
<dbReference type="Pfam" id="PF01094">
    <property type="entry name" value="ANF_receptor"/>
    <property type="match status" value="1"/>
</dbReference>
<dbReference type="Pfam" id="PF07562">
    <property type="entry name" value="NCD3G"/>
    <property type="match status" value="1"/>
</dbReference>
<dbReference type="PRINTS" id="PR00592">
    <property type="entry name" value="CASENSINGR"/>
</dbReference>
<dbReference type="PRINTS" id="PR00248">
    <property type="entry name" value="GPCRMGR"/>
</dbReference>
<dbReference type="SUPFAM" id="SSF53822">
    <property type="entry name" value="Periplasmic binding protein-like I"/>
    <property type="match status" value="1"/>
</dbReference>
<dbReference type="PROSITE" id="PS00980">
    <property type="entry name" value="G_PROTEIN_RECEP_F3_2"/>
    <property type="match status" value="1"/>
</dbReference>
<dbReference type="PROSITE" id="PS50259">
    <property type="entry name" value="G_PROTEIN_RECEP_F3_4"/>
    <property type="match status" value="1"/>
</dbReference>
<reference key="1">
    <citation type="submission" date="2006-02" db="EMBL/GenBank/DDBJ databases">
        <title>Sweet receptor gene variation and aspartame blindness in both primates and non-primates.</title>
        <authorList>
            <person name="Li X."/>
            <person name="Wong E.W."/>
            <person name="Li W."/>
            <person name="Lim R."/>
            <person name="Mascioli K.J."/>
            <person name="Maehashi K."/>
            <person name="Bachmanov A.A."/>
            <person name="Tordoff M.G."/>
            <person name="Beauchamp G.K."/>
            <person name="Reed D.R."/>
        </authorList>
    </citation>
    <scope>NUCLEOTIDE SEQUENCE [GENOMIC DNA]</scope>
</reference>
<proteinExistence type="evidence at transcript level"/>
<feature type="signal peptide" evidence="2">
    <location>
        <begin position="1"/>
        <end position="19"/>
    </location>
</feature>
<feature type="chain" id="PRO_0000285554" description="Taste receptor type 1 member 2">
    <location>
        <begin position="20"/>
        <end position="839"/>
    </location>
</feature>
<feature type="topological domain" description="Extracellular" evidence="2">
    <location>
        <begin position="20"/>
        <end position="566"/>
    </location>
</feature>
<feature type="transmembrane region" description="Helical; Name=1" evidence="2">
    <location>
        <begin position="567"/>
        <end position="587"/>
    </location>
</feature>
<feature type="topological domain" description="Cytoplasmic" evidence="2">
    <location>
        <begin position="588"/>
        <end position="602"/>
    </location>
</feature>
<feature type="transmembrane region" description="Helical; Name=2" evidence="2">
    <location>
        <begin position="603"/>
        <end position="623"/>
    </location>
</feature>
<feature type="topological domain" description="Extracellular" evidence="2">
    <location>
        <begin position="624"/>
        <end position="635"/>
    </location>
</feature>
<feature type="transmembrane region" description="Helical; Name=3" evidence="2">
    <location>
        <begin position="636"/>
        <end position="656"/>
    </location>
</feature>
<feature type="topological domain" description="Cytoplasmic" evidence="2">
    <location>
        <begin position="657"/>
        <end position="681"/>
    </location>
</feature>
<feature type="transmembrane region" description="Helical; Name=4" evidence="2">
    <location>
        <begin position="682"/>
        <end position="702"/>
    </location>
</feature>
<feature type="topological domain" description="Extracellular" evidence="2">
    <location>
        <begin position="703"/>
        <end position="727"/>
    </location>
</feature>
<feature type="transmembrane region" description="Helical; Name=5" evidence="2">
    <location>
        <begin position="728"/>
        <end position="748"/>
    </location>
</feature>
<feature type="topological domain" description="Cytoplasmic" evidence="2">
    <location>
        <begin position="749"/>
        <end position="760"/>
    </location>
</feature>
<feature type="transmembrane region" description="Helical; Name=6" evidence="2">
    <location>
        <begin position="761"/>
        <end position="781"/>
    </location>
</feature>
<feature type="topological domain" description="Extracellular" evidence="2">
    <location>
        <begin position="782"/>
        <end position="784"/>
    </location>
</feature>
<feature type="transmembrane region" description="Helical; Name=7" evidence="2">
    <location>
        <begin position="785"/>
        <end position="805"/>
    </location>
</feature>
<feature type="topological domain" description="Cytoplasmic" evidence="2">
    <location>
        <begin position="806"/>
        <end position="839"/>
    </location>
</feature>
<feature type="glycosylation site" description="N-linked (GlcNAc...) asparagine" evidence="2">
    <location>
        <position position="84"/>
    </location>
</feature>
<feature type="glycosylation site" description="N-linked (GlcNAc...) asparagine" evidence="2">
    <location>
        <position position="127"/>
    </location>
</feature>
<feature type="glycosylation site" description="N-linked (GlcNAc...) asparagine" evidence="2">
    <location>
        <position position="248"/>
    </location>
</feature>
<feature type="glycosylation site" description="N-linked (GlcNAc...) asparagine" evidence="2">
    <location>
        <position position="292"/>
    </location>
</feature>
<feature type="glycosylation site" description="N-linked (GlcNAc...) asparagine" evidence="2">
    <location>
        <position position="312"/>
    </location>
</feature>
<feature type="glycosylation site" description="N-linked (GlcNAc...) asparagine" evidence="2">
    <location>
        <position position="368"/>
    </location>
</feature>
<feature type="glycosylation site" description="N-linked (GlcNAc...) asparagine" evidence="2">
    <location>
        <position position="428"/>
    </location>
</feature>
<feature type="glycosylation site" description="N-linked (GlcNAc...) asparagine" evidence="2">
    <location>
        <position position="487"/>
    </location>
</feature>
<feature type="glycosylation site" description="N-linked (GlcNAc...) asparagine" evidence="2">
    <location>
        <position position="527"/>
    </location>
</feature>
<protein>
    <recommendedName>
        <fullName>Taste receptor type 1 member 2</fullName>
    </recommendedName>
    <alternativeName>
        <fullName>Sweet taste receptor T1R2</fullName>
    </alternativeName>
</protein>
<accession>A3QP07</accession>
<gene>
    <name type="primary">TAS1R2</name>
</gene>
<name>TS1R2_PAPHA</name>
<comment type="function">
    <text evidence="1">Putative taste receptor. TAS1R2/TAS1R3 recognizes diverse natural and synthetic sweeteners (By similarity).</text>
</comment>
<comment type="subunit">
    <text evidence="1">Forms heterodimers with TAS1R3.</text>
</comment>
<comment type="subcellular location">
    <subcellularLocation>
        <location evidence="1">Cell membrane</location>
        <topology evidence="1">Multi-pass membrane protein</topology>
    </subcellularLocation>
</comment>
<comment type="similarity">
    <text evidence="3">Belongs to the G-protein coupled receptor 3 family. TAS1R subfamily.</text>
</comment>
<evidence type="ECO:0000250" key="1"/>
<evidence type="ECO:0000255" key="2"/>
<evidence type="ECO:0000305" key="3"/>
<keyword id="KW-1003">Cell membrane</keyword>
<keyword id="KW-0297">G-protein coupled receptor</keyword>
<keyword id="KW-0325">Glycoprotein</keyword>
<keyword id="KW-0472">Membrane</keyword>
<keyword id="KW-0675">Receptor</keyword>
<keyword id="KW-0716">Sensory transduction</keyword>
<keyword id="KW-0732">Signal</keyword>
<keyword id="KW-0919">Taste</keyword>
<keyword id="KW-0807">Transducer</keyword>
<keyword id="KW-0812">Transmembrane</keyword>
<keyword id="KW-1133">Transmembrane helix</keyword>